<protein>
    <recommendedName>
        <fullName>Deaminated glutathione amidase</fullName>
        <shortName>dGSH amidase</shortName>
        <ecNumber evidence="1">3.5.1.128</ecNumber>
    </recommendedName>
    <alternativeName>
        <fullName>Nitrilase homolog 1</fullName>
    </alternativeName>
</protein>
<evidence type="ECO:0000250" key="1">
    <source>
        <dbReference type="UniProtKB" id="Q8VDK1"/>
    </source>
</evidence>
<evidence type="ECO:0000255" key="2"/>
<evidence type="ECO:0000255" key="3">
    <source>
        <dbReference type="PROSITE-ProRule" id="PRU00054"/>
    </source>
</evidence>
<evidence type="ECO:0000305" key="4"/>
<proteinExistence type="evidence at transcript level"/>
<comment type="function">
    <text evidence="1">Catalyzes the hydrolysis of the amide bond in N-(4-oxoglutarate)-L-cysteinylglycine (deaminated glutathione), a metabolite repair reaction to dispose of the harmful deaminated glutathione. Plays a role in cell growth and apoptosis: loss of expression promotes cell growth, resistance to DNA damage stress and increased incidence to NMBA-induced tumors. Has tumor suppressor properties that enhances the apoptotic responsiveness in cancer cells; this effect is additive to the tumor suppressor activity of FHIT. It is also a negative regulator of primary T-cells.</text>
</comment>
<comment type="catalytic activity">
    <reaction evidence="1">
        <text>N-(4-oxoglutaryl)-L-cysteinylglycine + H2O = L-cysteinylglycine + 2-oxoglutarate</text>
        <dbReference type="Rhea" id="RHEA:54532"/>
        <dbReference type="ChEBI" id="CHEBI:15377"/>
        <dbReference type="ChEBI" id="CHEBI:16810"/>
        <dbReference type="ChEBI" id="CHEBI:61694"/>
        <dbReference type="ChEBI" id="CHEBI:138256"/>
        <dbReference type="EC" id="3.5.1.128"/>
    </reaction>
</comment>
<comment type="subcellular location">
    <molecule>Isoform 1</molecule>
    <subcellularLocation>
        <location evidence="1">Mitochondrion</location>
    </subcellularLocation>
</comment>
<comment type="subcellular location">
    <molecule>Isoform 2</molecule>
    <subcellularLocation>
        <location evidence="1">Cytoplasm</location>
    </subcellularLocation>
</comment>
<comment type="alternative products">
    <event type="alternative splicing"/>
    <isoform>
        <id>Q7TQ94-1</id>
        <name>1</name>
        <sequence type="displayed"/>
    </isoform>
    <isoform>
        <id>Q7TQ94-2</id>
        <name>2</name>
        <sequence type="described" ref="VSP_059159"/>
    </isoform>
</comment>
<comment type="miscellaneous">
    <text>According to Rosetta Stone theory, the existence of a fusion protein in one genome predicts that the separate polypeptides expressed in other organisms function in the same cellular or biochemical pathway. In Drosophila melanogaster and Caenorhabditis elegans, NitFhit is a fusion protein composed of a C-terminal Fhit domain and a domain related to plant and bacterial nitrilase.</text>
</comment>
<comment type="similarity">
    <text evidence="4">Belongs to the carbon-nitrogen hydrolase superfamily. NIT1/NIT2 family.</text>
</comment>
<accession>Q7TQ94</accession>
<accession>Q5PQK6</accession>
<feature type="transit peptide" description="Mitochondrion" evidence="2">
    <location>
        <begin position="1"/>
        <end position="36"/>
    </location>
</feature>
<feature type="chain" id="PRO_0000213253" description="Deaminated glutathione amidase">
    <location>
        <begin position="37"/>
        <end position="327"/>
    </location>
</feature>
<feature type="domain" description="CN hydrolase" evidence="3">
    <location>
        <begin position="47"/>
        <end position="299"/>
    </location>
</feature>
<feature type="active site" description="Proton acceptor" evidence="3">
    <location>
        <position position="87"/>
    </location>
</feature>
<feature type="active site" description="Proton donor" evidence="3">
    <location>
        <position position="162"/>
    </location>
</feature>
<feature type="active site" description="Nucleophile" evidence="3">
    <location>
        <position position="204"/>
    </location>
</feature>
<feature type="splice variant" id="VSP_059159" description="In isoform 2.">
    <location>
        <begin position="1"/>
        <end position="36"/>
    </location>
</feature>
<feature type="sequence conflict" description="In Ref. 1." evidence="4" ref="1">
    <original>L</original>
    <variation>LG</variation>
    <location>
        <position position="323"/>
    </location>
</feature>
<sequence length="327" mass="36094">MLGFITRPPHQLLSLLCTGYRLPQISVLCTQPRPRAMAESSSTSWELPLVAVCQVTSTPNKQENFKTCAELVQEATRLGACLAFLPEAFDFIARNPAETLLLSEPLDGDLLGQYSQLARECGIWLSLGGFHERGQDWEQTQKIYNCHVLLNSKGSVVASYRKTHLCDVEIPGQGPMRESNYTMPGYALEPPVKTPAGKVGLAICYDMRFPELSLKLAQAGAEILTYPSAFGSVTGPAHWEVLLRARAIESQCYVIAAAQCGRHHETRASYGHSMVVDPWGTVVASCSEGPGLCLARIDLHFLQQMRQHLPVFQHRRPDLYGSLLPLS</sequence>
<keyword id="KW-0025">Alternative splicing</keyword>
<keyword id="KW-0963">Cytoplasm</keyword>
<keyword id="KW-0378">Hydrolase</keyword>
<keyword id="KW-0496">Mitochondrion</keyword>
<keyword id="KW-1185">Reference proteome</keyword>
<keyword id="KW-0809">Transit peptide</keyword>
<name>NIT1_RAT</name>
<organism>
    <name type="scientific">Rattus norvegicus</name>
    <name type="common">Rat</name>
    <dbReference type="NCBI Taxonomy" id="10116"/>
    <lineage>
        <taxon>Eukaryota</taxon>
        <taxon>Metazoa</taxon>
        <taxon>Chordata</taxon>
        <taxon>Craniata</taxon>
        <taxon>Vertebrata</taxon>
        <taxon>Euteleostomi</taxon>
        <taxon>Mammalia</taxon>
        <taxon>Eutheria</taxon>
        <taxon>Euarchontoglires</taxon>
        <taxon>Glires</taxon>
        <taxon>Rodentia</taxon>
        <taxon>Myomorpha</taxon>
        <taxon>Muroidea</taxon>
        <taxon>Muridae</taxon>
        <taxon>Murinae</taxon>
        <taxon>Rattus</taxon>
    </lineage>
</organism>
<gene>
    <name type="primary">Nit1</name>
    <name type="ORF">rCG_20134</name>
</gene>
<dbReference type="EC" id="3.5.1.128" evidence="1"/>
<dbReference type="EMBL" id="AY300752">
    <property type="protein sequence ID" value="AAP76395.1"/>
    <property type="molecule type" value="mRNA"/>
</dbReference>
<dbReference type="EMBL" id="CH473985">
    <property type="protein sequence ID" value="EDL94640.1"/>
    <property type="molecule type" value="Genomic_DNA"/>
</dbReference>
<dbReference type="EMBL" id="BC087146">
    <property type="protein sequence ID" value="AAH87146.1"/>
    <property type="molecule type" value="mRNA"/>
</dbReference>
<dbReference type="RefSeq" id="NP_001076049.1">
    <molecule id="Q7TQ94-2"/>
    <property type="nucleotide sequence ID" value="NM_001082580.1"/>
</dbReference>
<dbReference type="RefSeq" id="NP_001292575.1">
    <property type="nucleotide sequence ID" value="NM_001305646.1"/>
</dbReference>
<dbReference type="RefSeq" id="NP_001292576.1">
    <molecule id="Q7TQ94-2"/>
    <property type="nucleotide sequence ID" value="NM_001305647.1"/>
</dbReference>
<dbReference type="RefSeq" id="NP_872609.2">
    <molecule id="Q7TQ94-1"/>
    <property type="nucleotide sequence ID" value="NM_182668.2"/>
</dbReference>
<dbReference type="SMR" id="Q7TQ94"/>
<dbReference type="FunCoup" id="Q7TQ94">
    <property type="interactions" value="1549"/>
</dbReference>
<dbReference type="STRING" id="10116.ENSRNOP00000005194"/>
<dbReference type="iPTMnet" id="Q7TQ94"/>
<dbReference type="PhosphoSitePlus" id="Q7TQ94"/>
<dbReference type="jPOST" id="Q7TQ94"/>
<dbReference type="PaxDb" id="10116-ENSRNOP00000005194"/>
<dbReference type="PeptideAtlas" id="Q7TQ94"/>
<dbReference type="Ensembl" id="ENSRNOT00000117822.1">
    <molecule id="Q7TQ94-2"/>
    <property type="protein sequence ID" value="ENSRNOP00000096370.1"/>
    <property type="gene ID" value="ENSRNOG00000003881.7"/>
</dbReference>
<dbReference type="GeneID" id="289222"/>
<dbReference type="KEGG" id="rno:289222"/>
<dbReference type="AGR" id="RGD:727821"/>
<dbReference type="CTD" id="4817"/>
<dbReference type="RGD" id="727821">
    <property type="gene designation" value="Nit1"/>
</dbReference>
<dbReference type="VEuPathDB" id="HostDB:ENSRNOG00000003881"/>
<dbReference type="eggNOG" id="KOG0807">
    <property type="taxonomic scope" value="Eukaryota"/>
</dbReference>
<dbReference type="GeneTree" id="ENSGT00550000075099"/>
<dbReference type="InParanoid" id="Q7TQ94"/>
<dbReference type="OrthoDB" id="8531at9989"/>
<dbReference type="TreeFam" id="TF313080"/>
<dbReference type="PRO" id="PR:Q7TQ94"/>
<dbReference type="Proteomes" id="UP000002494">
    <property type="component" value="Chromosome 13"/>
</dbReference>
<dbReference type="Proteomes" id="UP000234681">
    <property type="component" value="Chromosome 13"/>
</dbReference>
<dbReference type="Bgee" id="ENSRNOG00000003881">
    <property type="expression patterns" value="Expressed in kidney and 20 other cell types or tissues"/>
</dbReference>
<dbReference type="GO" id="GO:0005737">
    <property type="term" value="C:cytoplasm"/>
    <property type="evidence" value="ECO:0000266"/>
    <property type="project" value="RGD"/>
</dbReference>
<dbReference type="GO" id="GO:0005739">
    <property type="term" value="C:mitochondrion"/>
    <property type="evidence" value="ECO:0000266"/>
    <property type="project" value="RGD"/>
</dbReference>
<dbReference type="GO" id="GO:0110050">
    <property type="term" value="F:deaminated glutathione amidase activity"/>
    <property type="evidence" value="ECO:0000266"/>
    <property type="project" value="RGD"/>
</dbReference>
<dbReference type="GO" id="GO:0043605">
    <property type="term" value="P:amide catabolic process"/>
    <property type="evidence" value="ECO:0000266"/>
    <property type="project" value="RGD"/>
</dbReference>
<dbReference type="CDD" id="cd07572">
    <property type="entry name" value="nit"/>
    <property type="match status" value="1"/>
</dbReference>
<dbReference type="FunFam" id="3.60.110.10:FF:000005">
    <property type="entry name" value="nitrilase homolog 1 isoform X1"/>
    <property type="match status" value="1"/>
</dbReference>
<dbReference type="Gene3D" id="3.60.110.10">
    <property type="entry name" value="Carbon-nitrogen hydrolase"/>
    <property type="match status" value="1"/>
</dbReference>
<dbReference type="InterPro" id="IPR003010">
    <property type="entry name" value="C-N_Hydrolase"/>
</dbReference>
<dbReference type="InterPro" id="IPR036526">
    <property type="entry name" value="C-N_Hydrolase_sf"/>
</dbReference>
<dbReference type="InterPro" id="IPR045254">
    <property type="entry name" value="Nit1/2_C-N_Hydrolase"/>
</dbReference>
<dbReference type="InterPro" id="IPR001110">
    <property type="entry name" value="UPF0012_CS"/>
</dbReference>
<dbReference type="PANTHER" id="PTHR23088:SF27">
    <property type="entry name" value="DEAMINATED GLUTATHIONE AMIDASE"/>
    <property type="match status" value="1"/>
</dbReference>
<dbReference type="PANTHER" id="PTHR23088">
    <property type="entry name" value="NITRILASE-RELATED"/>
    <property type="match status" value="1"/>
</dbReference>
<dbReference type="Pfam" id="PF00795">
    <property type="entry name" value="CN_hydrolase"/>
    <property type="match status" value="1"/>
</dbReference>
<dbReference type="SUPFAM" id="SSF56317">
    <property type="entry name" value="Carbon-nitrogen hydrolase"/>
    <property type="match status" value="1"/>
</dbReference>
<dbReference type="PROSITE" id="PS50263">
    <property type="entry name" value="CN_HYDROLASE"/>
    <property type="match status" value="1"/>
</dbReference>
<dbReference type="PROSITE" id="PS01227">
    <property type="entry name" value="UPF0012"/>
    <property type="match status" value="1"/>
</dbReference>
<reference key="1">
    <citation type="submission" date="2003-05" db="EMBL/GenBank/DDBJ databases">
        <title>Nirilase 1 expression in acute mesangio-proliferative glomerulonephritis.</title>
        <authorList>
            <person name="Minto A.W. Jr."/>
            <person name="Quigg R.J. Jr."/>
        </authorList>
    </citation>
    <scope>NUCLEOTIDE SEQUENCE [MRNA] (ISOFORM 2)</scope>
    <source>
        <strain>Sprague-Dawley</strain>
    </source>
</reference>
<reference key="2">
    <citation type="submission" date="2005-07" db="EMBL/GenBank/DDBJ databases">
        <authorList>
            <person name="Mural R.J."/>
            <person name="Adams M.D."/>
            <person name="Myers E.W."/>
            <person name="Smith H.O."/>
            <person name="Venter J.C."/>
        </authorList>
    </citation>
    <scope>NUCLEOTIDE SEQUENCE [LARGE SCALE GENOMIC DNA]</scope>
    <source>
        <strain>Brown Norway</strain>
    </source>
</reference>
<reference key="3">
    <citation type="journal article" date="2004" name="Genome Res.">
        <title>The status, quality, and expansion of the NIH full-length cDNA project: the Mammalian Gene Collection (MGC).</title>
        <authorList>
            <consortium name="The MGC Project Team"/>
        </authorList>
    </citation>
    <scope>NUCLEOTIDE SEQUENCE [LARGE SCALE MRNA] (ISOFORM 1)</scope>
    <source>
        <tissue>Kidney</tissue>
    </source>
</reference>